<organism>
    <name type="scientific">Rhinolophus ferrumequinum</name>
    <name type="common">Greater horseshoe bat</name>
    <dbReference type="NCBI Taxonomy" id="59479"/>
    <lineage>
        <taxon>Eukaryota</taxon>
        <taxon>Metazoa</taxon>
        <taxon>Chordata</taxon>
        <taxon>Craniata</taxon>
        <taxon>Vertebrata</taxon>
        <taxon>Euteleostomi</taxon>
        <taxon>Mammalia</taxon>
        <taxon>Eutheria</taxon>
        <taxon>Laurasiatheria</taxon>
        <taxon>Chiroptera</taxon>
        <taxon>Yinpterochiroptera</taxon>
        <taxon>Rhinolophoidea</taxon>
        <taxon>Rhinolophidae</taxon>
        <taxon>Rhinolophinae</taxon>
        <taxon>Rhinolophus</taxon>
    </lineage>
</organism>
<reference key="1">
    <citation type="submission" date="2008-04" db="EMBL/GenBank/DDBJ databases">
        <title>NISC comparative sequencing initiative.</title>
        <authorList>
            <person name="Antonellis A."/>
            <person name="Ayele K."/>
            <person name="Benjamin B."/>
            <person name="Blakesley R.W."/>
            <person name="Boakye A."/>
            <person name="Bouffard G.G."/>
            <person name="Brinkley C."/>
            <person name="Brooks S."/>
            <person name="Chu G."/>
            <person name="Coleman H."/>
            <person name="Engle J."/>
            <person name="Gestole M."/>
            <person name="Greene A."/>
            <person name="Guan X."/>
            <person name="Gupta J."/>
            <person name="Haghighi P."/>
            <person name="Han J."/>
            <person name="Hansen N."/>
            <person name="Ho S.-L."/>
            <person name="Hu P."/>
            <person name="Hunter G."/>
            <person name="Hurle B."/>
            <person name="Idol J.R."/>
            <person name="Kwong P."/>
            <person name="Laric P."/>
            <person name="Larson S."/>
            <person name="Lee-Lin S.-Q."/>
            <person name="Legaspi R."/>
            <person name="Madden M."/>
            <person name="Maduro Q.L."/>
            <person name="Maduro V.B."/>
            <person name="Margulies E.H."/>
            <person name="Masiello C."/>
            <person name="Maskeri B."/>
            <person name="McDowell J."/>
            <person name="Mojidi H.A."/>
            <person name="Mullikin J.C."/>
            <person name="Oestreicher J.S."/>
            <person name="Park M."/>
            <person name="Portnoy M.E."/>
            <person name="Prasad A."/>
            <person name="Puri O."/>
            <person name="Reddix-Dugue N."/>
            <person name="Schandler K."/>
            <person name="Schueler M.G."/>
            <person name="Sison C."/>
            <person name="Stantripop S."/>
            <person name="Stephen E."/>
            <person name="Taye A."/>
            <person name="Thomas J.W."/>
            <person name="Thomas P.J."/>
            <person name="Tsipouri V."/>
            <person name="Ung L."/>
            <person name="Vogt J.L."/>
            <person name="Wetherby K.D."/>
            <person name="Young A."/>
            <person name="Green E.D."/>
        </authorList>
    </citation>
    <scope>NUCLEOTIDE SEQUENCE [LARGE SCALE GENOMIC DNA]</scope>
</reference>
<evidence type="ECO:0000250" key="1">
    <source>
        <dbReference type="UniProtKB" id="P11441"/>
    </source>
</evidence>
<evidence type="ECO:0000255" key="2">
    <source>
        <dbReference type="PROSITE-ProRule" id="PRU00214"/>
    </source>
</evidence>
<gene>
    <name type="primary">UBL4A</name>
</gene>
<protein>
    <recommendedName>
        <fullName>Ubiquitin-like protein 4A</fullName>
    </recommendedName>
</protein>
<keyword id="KW-0963">Cytoplasm</keyword>
<keyword id="KW-1017">Isopeptide bond</keyword>
<keyword id="KW-0539">Nucleus</keyword>
<keyword id="KW-1185">Reference proteome</keyword>
<keyword id="KW-0813">Transport</keyword>
<keyword id="KW-0832">Ubl conjugation</keyword>
<name>UBL4A_RHIFE</name>
<comment type="function">
    <text evidence="1">As part of a cytosolic protein quality control complex, the BAG6/BAT3 complex, maintains misfolded and hydrophobic patches-containing proteins in a soluble state and participates in their proper delivery to the endoplasmic reticulum or alternatively can promote their sorting to the proteasome where they undergo degradation. The BAG6/BAT3 complex is involved in the post-translational delivery of tail-anchored/type II transmembrane proteins to the endoplasmic reticulum membrane. Recruited to ribosomes, it interacts with the transmembrane region of newly synthesized tail-anchored proteins and together with SGTA and ASNA1 mediates their delivery to the endoplasmic reticulum. Client proteins that cannot be properly delivered to the endoplasmic reticulum are ubiquitinated and sorted to the proteasome. Similarly, the BAG6/BAT3 complex also functions as a sorting platform for proteins of the secretory pathway that are mislocalized to the cytosol either delivering them to the proteasome for degradation or to the endoplasmic reticulum. The BAG6/BAT3 complex also plays a role in the endoplasmic reticulum-associated degradation (ERAD), a quality control mechanism that eliminates unwanted proteins of the endoplasmic reticulum through their retrotranslocation to the cytosol and their targeting to the proteasome. It maintains these retrotranslocated proteins in an unfolded yet soluble state condition in the cytosol to ensure their proper delivery to the proteasome.</text>
</comment>
<comment type="subunit">
    <text evidence="1">Component of the BAG6/BAT3 complex, at least composed of BAG6, UBL4A and GET4/TRC35. Interacts with BAG6; the interaction is direct and required for UBL4A protein stability. Interacts with USP13; may be indirect via BAG6.</text>
</comment>
<comment type="subcellular location">
    <subcellularLocation>
        <location evidence="1">Cytoplasm</location>
        <location evidence="1">Cytosol</location>
    </subcellularLocation>
    <subcellularLocation>
        <location evidence="1">Nucleus</location>
    </subcellularLocation>
</comment>
<comment type="PTM">
    <text evidence="1">Polyubiquitinated. Ubiquitination by AMFR and deubiquitination by USP13 may regulate the interaction between the BAG6/BAT complex and SGTA and therefore may regulate client proteins fate.</text>
</comment>
<accession>B2KIK3</accession>
<dbReference type="EMBL" id="DP000725">
    <property type="protein sequence ID" value="ACC68911.1"/>
    <property type="molecule type" value="Genomic_DNA"/>
</dbReference>
<dbReference type="SMR" id="B2KIK3"/>
<dbReference type="FunCoup" id="B2KIK3">
    <property type="interactions" value="1360"/>
</dbReference>
<dbReference type="InParanoid" id="B2KIK3"/>
<dbReference type="Proteomes" id="UP000472240">
    <property type="component" value="Unplaced"/>
</dbReference>
<dbReference type="GO" id="GO:0071818">
    <property type="term" value="C:BAT3 complex"/>
    <property type="evidence" value="ECO:0000250"/>
    <property type="project" value="UniProtKB"/>
</dbReference>
<dbReference type="GO" id="GO:0005829">
    <property type="term" value="C:cytosol"/>
    <property type="evidence" value="ECO:0000250"/>
    <property type="project" value="UniProtKB"/>
</dbReference>
<dbReference type="GO" id="GO:0005634">
    <property type="term" value="C:nucleus"/>
    <property type="evidence" value="ECO:0007669"/>
    <property type="project" value="UniProtKB-SubCell"/>
</dbReference>
<dbReference type="GO" id="GO:0051087">
    <property type="term" value="F:protein-folding chaperone binding"/>
    <property type="evidence" value="ECO:0007669"/>
    <property type="project" value="TreeGrafter"/>
</dbReference>
<dbReference type="GO" id="GO:0006620">
    <property type="term" value="P:post-translational protein targeting to endoplasmic reticulum membrane"/>
    <property type="evidence" value="ECO:0007669"/>
    <property type="project" value="InterPro"/>
</dbReference>
<dbReference type="GO" id="GO:0071816">
    <property type="term" value="P:tail-anchored membrane protein insertion into ER membrane"/>
    <property type="evidence" value="ECO:0000250"/>
    <property type="project" value="UniProtKB"/>
</dbReference>
<dbReference type="CDD" id="cd01807">
    <property type="entry name" value="Ubl_UBL4A_like"/>
    <property type="match status" value="1"/>
</dbReference>
<dbReference type="FunFam" id="3.10.20.90:FF:000144">
    <property type="entry name" value="Ubiquitin-like protein 4A"/>
    <property type="match status" value="1"/>
</dbReference>
<dbReference type="Gene3D" id="3.10.20.90">
    <property type="entry name" value="Phosphatidylinositol 3-kinase Catalytic Subunit, Chain A, domain 1"/>
    <property type="match status" value="1"/>
</dbReference>
<dbReference type="InterPro" id="IPR000626">
    <property type="entry name" value="Ubiquitin-like_dom"/>
</dbReference>
<dbReference type="InterPro" id="IPR029071">
    <property type="entry name" value="Ubiquitin-like_domsf"/>
</dbReference>
<dbReference type="InterPro" id="IPR019954">
    <property type="entry name" value="Ubiquitin_CS"/>
</dbReference>
<dbReference type="InterPro" id="IPR019956">
    <property type="entry name" value="Ubiquitin_dom"/>
</dbReference>
<dbReference type="InterPro" id="IPR041421">
    <property type="entry name" value="Ubl4_C_TUGS"/>
</dbReference>
<dbReference type="InterPro" id="IPR047154">
    <property type="entry name" value="UBL4A-like"/>
</dbReference>
<dbReference type="InterPro" id="IPR044724">
    <property type="entry name" value="Ubl_UBL4A-like"/>
</dbReference>
<dbReference type="PANTHER" id="PTHR46555">
    <property type="entry name" value="UBIQUITIN-LIKE PROTEIN 4A"/>
    <property type="match status" value="1"/>
</dbReference>
<dbReference type="PANTHER" id="PTHR46555:SF1">
    <property type="entry name" value="UBIQUITIN-LIKE PROTEIN 4A"/>
    <property type="match status" value="1"/>
</dbReference>
<dbReference type="Pfam" id="PF17840">
    <property type="entry name" value="Tugs"/>
    <property type="match status" value="1"/>
</dbReference>
<dbReference type="Pfam" id="PF00240">
    <property type="entry name" value="ubiquitin"/>
    <property type="match status" value="1"/>
</dbReference>
<dbReference type="PRINTS" id="PR00348">
    <property type="entry name" value="UBIQUITIN"/>
</dbReference>
<dbReference type="SMART" id="SM00213">
    <property type="entry name" value="UBQ"/>
    <property type="match status" value="1"/>
</dbReference>
<dbReference type="SUPFAM" id="SSF54236">
    <property type="entry name" value="Ubiquitin-like"/>
    <property type="match status" value="1"/>
</dbReference>
<dbReference type="PROSITE" id="PS00299">
    <property type="entry name" value="UBIQUITIN_1"/>
    <property type="match status" value="1"/>
</dbReference>
<dbReference type="PROSITE" id="PS50053">
    <property type="entry name" value="UBIQUITIN_2"/>
    <property type="match status" value="1"/>
</dbReference>
<sequence length="160" mass="17926">MQLTVKALQGRECSLQVSEDELVSTLKHVVSEKLNVPVRQQRLLFKGKALADGKRLSDYSIGPNSKLNLVVKPLEKVLLEESAAACRLTEAPLPRPPAWQLIAKVLARHFSAADASRVLDQLQRDYERSLSRLTLDDIERLASRFLHPEVTEAVEKGFSK</sequence>
<proteinExistence type="inferred from homology"/>
<feature type="chain" id="PRO_0000403740" description="Ubiquitin-like protein 4A">
    <location>
        <begin position="1"/>
        <end position="160"/>
    </location>
</feature>
<feature type="domain" description="Ubiquitin-like" evidence="2">
    <location>
        <begin position="1"/>
        <end position="76"/>
    </location>
</feature>
<feature type="region of interest" description="Required and sufficient for interaction with BAG6" evidence="1">
    <location>
        <begin position="99"/>
        <end position="141"/>
    </location>
</feature>
<feature type="cross-link" description="Glycyl lysine isopeptide (Lys-Gly) (interchain with G-Cter in ubiquitin)" evidence="1">
    <location>
        <position position="48"/>
    </location>
</feature>